<name>GPMA_PELUB</name>
<feature type="chain" id="PRO_0000229134" description="2,3-bisphosphoglycerate-dependent phosphoglycerate mutase">
    <location>
        <begin position="1"/>
        <end position="238"/>
    </location>
</feature>
<feature type="active site" description="Tele-phosphohistidine intermediate" evidence="1">
    <location>
        <position position="9"/>
    </location>
</feature>
<feature type="active site" description="Proton donor/acceptor" evidence="1">
    <location>
        <position position="86"/>
    </location>
</feature>
<feature type="binding site" evidence="1">
    <location>
        <begin position="8"/>
        <end position="15"/>
    </location>
    <ligand>
        <name>substrate</name>
    </ligand>
</feature>
<feature type="binding site" evidence="1">
    <location>
        <begin position="21"/>
        <end position="22"/>
    </location>
    <ligand>
        <name>substrate</name>
    </ligand>
</feature>
<feature type="binding site" evidence="1">
    <location>
        <position position="60"/>
    </location>
    <ligand>
        <name>substrate</name>
    </ligand>
</feature>
<feature type="binding site" evidence="1">
    <location>
        <begin position="86"/>
        <end position="89"/>
    </location>
    <ligand>
        <name>substrate</name>
    </ligand>
</feature>
<feature type="binding site" evidence="1">
    <location>
        <position position="97"/>
    </location>
    <ligand>
        <name>substrate</name>
    </ligand>
</feature>
<feature type="binding site" evidence="1">
    <location>
        <begin position="113"/>
        <end position="114"/>
    </location>
    <ligand>
        <name>substrate</name>
    </ligand>
</feature>
<feature type="binding site" evidence="1">
    <location>
        <begin position="182"/>
        <end position="183"/>
    </location>
    <ligand>
        <name>substrate</name>
    </ligand>
</feature>
<feature type="site" description="Transition state stabilizer" evidence="1">
    <location>
        <position position="181"/>
    </location>
</feature>
<sequence length="238" mass="28001">MTHLILVRHGQSEWNLEKRFTGWVDVDLTGQGKLEACKAGEYIKETKIDIDYFYSSFQLRAINTLKFIQDTLRDKREPVKAWQLNERHYGALTGLNKDEMKEKLGEDKIHAFRRSWDIKPDPLNRNNPYHPLNIEVYKSIPKENIPDTESLKDTYDRVMKFYIDEIQMKLKNDKNILISAHGNSIRALCKFLFKLDNQRITLLEIPTGNPLLINLDSKQNIKECTYLDQDRAKDLLVF</sequence>
<protein>
    <recommendedName>
        <fullName evidence="1">2,3-bisphosphoglycerate-dependent phosphoglycerate mutase</fullName>
        <shortName evidence="1">BPG-dependent PGAM</shortName>
        <shortName evidence="1">PGAM</shortName>
        <shortName evidence="1">Phosphoglyceromutase</shortName>
        <shortName evidence="1">dPGM</shortName>
        <ecNumber evidence="1">5.4.2.11</ecNumber>
    </recommendedName>
</protein>
<comment type="function">
    <text evidence="1">Catalyzes the interconversion of 2-phosphoglycerate and 3-phosphoglycerate.</text>
</comment>
<comment type="catalytic activity">
    <reaction evidence="1">
        <text>(2R)-2-phosphoglycerate = (2R)-3-phosphoglycerate</text>
        <dbReference type="Rhea" id="RHEA:15901"/>
        <dbReference type="ChEBI" id="CHEBI:58272"/>
        <dbReference type="ChEBI" id="CHEBI:58289"/>
        <dbReference type="EC" id="5.4.2.11"/>
    </reaction>
</comment>
<comment type="pathway">
    <text evidence="1">Carbohydrate degradation; glycolysis; pyruvate from D-glyceraldehyde 3-phosphate: step 3/5.</text>
</comment>
<comment type="subunit">
    <text evidence="1">Homodimer.</text>
</comment>
<comment type="similarity">
    <text evidence="1">Belongs to the phosphoglycerate mutase family. BPG-dependent PGAM subfamily.</text>
</comment>
<reference key="1">
    <citation type="journal article" date="2005" name="Science">
        <title>Genome streamlining in a cosmopolitan oceanic bacterium.</title>
        <authorList>
            <person name="Giovannoni S.J."/>
            <person name="Tripp H.J."/>
            <person name="Givan S."/>
            <person name="Podar M."/>
            <person name="Vergin K.L."/>
            <person name="Baptista D."/>
            <person name="Bibbs L."/>
            <person name="Eads J."/>
            <person name="Richardson T.H."/>
            <person name="Noordewier M."/>
            <person name="Rappe M.S."/>
            <person name="Short J.M."/>
            <person name="Carrington J.C."/>
            <person name="Mathur E.J."/>
        </authorList>
    </citation>
    <scope>NUCLEOTIDE SEQUENCE [LARGE SCALE GENOMIC DNA]</scope>
    <source>
        <strain>HTCC1062</strain>
    </source>
</reference>
<proteinExistence type="inferred from homology"/>
<accession>Q4FP74</accession>
<organism>
    <name type="scientific">Pelagibacter ubique (strain HTCC1062)</name>
    <dbReference type="NCBI Taxonomy" id="335992"/>
    <lineage>
        <taxon>Bacteria</taxon>
        <taxon>Pseudomonadati</taxon>
        <taxon>Pseudomonadota</taxon>
        <taxon>Alphaproteobacteria</taxon>
        <taxon>Candidatus Pelagibacterales</taxon>
        <taxon>Candidatus Pelagibacteraceae</taxon>
        <taxon>Candidatus Pelagibacter</taxon>
    </lineage>
</organism>
<dbReference type="EC" id="5.4.2.11" evidence="1"/>
<dbReference type="EMBL" id="CP000084">
    <property type="protein sequence ID" value="AAZ21015.1"/>
    <property type="molecule type" value="Genomic_DNA"/>
</dbReference>
<dbReference type="RefSeq" id="WP_011281538.1">
    <property type="nucleotide sequence ID" value="NC_007205.1"/>
</dbReference>
<dbReference type="SMR" id="Q4FP74"/>
<dbReference type="STRING" id="335992.SAR11_0193"/>
<dbReference type="GeneID" id="66294691"/>
<dbReference type="KEGG" id="pub:SAR11_0193"/>
<dbReference type="eggNOG" id="COG0588">
    <property type="taxonomic scope" value="Bacteria"/>
</dbReference>
<dbReference type="HOGENOM" id="CLU_033323_1_5_5"/>
<dbReference type="OrthoDB" id="9781415at2"/>
<dbReference type="UniPathway" id="UPA00109">
    <property type="reaction ID" value="UER00186"/>
</dbReference>
<dbReference type="Proteomes" id="UP000002528">
    <property type="component" value="Chromosome"/>
</dbReference>
<dbReference type="GO" id="GO:0004619">
    <property type="term" value="F:phosphoglycerate mutase activity"/>
    <property type="evidence" value="ECO:0007669"/>
    <property type="project" value="UniProtKB-EC"/>
</dbReference>
<dbReference type="GO" id="GO:0006094">
    <property type="term" value="P:gluconeogenesis"/>
    <property type="evidence" value="ECO:0007669"/>
    <property type="project" value="UniProtKB-UniRule"/>
</dbReference>
<dbReference type="GO" id="GO:0006096">
    <property type="term" value="P:glycolytic process"/>
    <property type="evidence" value="ECO:0007669"/>
    <property type="project" value="UniProtKB-UniRule"/>
</dbReference>
<dbReference type="CDD" id="cd07067">
    <property type="entry name" value="HP_PGM_like"/>
    <property type="match status" value="1"/>
</dbReference>
<dbReference type="Gene3D" id="3.40.50.1240">
    <property type="entry name" value="Phosphoglycerate mutase-like"/>
    <property type="match status" value="1"/>
</dbReference>
<dbReference type="HAMAP" id="MF_01039">
    <property type="entry name" value="PGAM_GpmA"/>
    <property type="match status" value="1"/>
</dbReference>
<dbReference type="InterPro" id="IPR013078">
    <property type="entry name" value="His_Pase_superF_clade-1"/>
</dbReference>
<dbReference type="InterPro" id="IPR029033">
    <property type="entry name" value="His_PPase_superfam"/>
</dbReference>
<dbReference type="InterPro" id="IPR001345">
    <property type="entry name" value="PG/BPGM_mutase_AS"/>
</dbReference>
<dbReference type="InterPro" id="IPR005952">
    <property type="entry name" value="Phosphogly_mut1"/>
</dbReference>
<dbReference type="NCBIfam" id="TIGR01258">
    <property type="entry name" value="pgm_1"/>
    <property type="match status" value="1"/>
</dbReference>
<dbReference type="PANTHER" id="PTHR11931">
    <property type="entry name" value="PHOSPHOGLYCERATE MUTASE"/>
    <property type="match status" value="1"/>
</dbReference>
<dbReference type="Pfam" id="PF00300">
    <property type="entry name" value="His_Phos_1"/>
    <property type="match status" value="2"/>
</dbReference>
<dbReference type="PIRSF" id="PIRSF000709">
    <property type="entry name" value="6PFK_2-Ptase"/>
    <property type="match status" value="1"/>
</dbReference>
<dbReference type="SMART" id="SM00855">
    <property type="entry name" value="PGAM"/>
    <property type="match status" value="1"/>
</dbReference>
<dbReference type="SUPFAM" id="SSF53254">
    <property type="entry name" value="Phosphoglycerate mutase-like"/>
    <property type="match status" value="1"/>
</dbReference>
<dbReference type="PROSITE" id="PS00175">
    <property type="entry name" value="PG_MUTASE"/>
    <property type="match status" value="1"/>
</dbReference>
<evidence type="ECO:0000255" key="1">
    <source>
        <dbReference type="HAMAP-Rule" id="MF_01039"/>
    </source>
</evidence>
<keyword id="KW-0312">Gluconeogenesis</keyword>
<keyword id="KW-0324">Glycolysis</keyword>
<keyword id="KW-0413">Isomerase</keyword>
<keyword id="KW-1185">Reference proteome</keyword>
<gene>
    <name evidence="1" type="primary">gpmA</name>
    <name type="ordered locus">SAR11_0193</name>
</gene>